<organism>
    <name type="scientific">Photorhabdus laumondii subsp. laumondii (strain DSM 15139 / CIP 105565 / TT01)</name>
    <name type="common">Photorhabdus luminescens subsp. laumondii</name>
    <dbReference type="NCBI Taxonomy" id="243265"/>
    <lineage>
        <taxon>Bacteria</taxon>
        <taxon>Pseudomonadati</taxon>
        <taxon>Pseudomonadota</taxon>
        <taxon>Gammaproteobacteria</taxon>
        <taxon>Enterobacterales</taxon>
        <taxon>Morganellaceae</taxon>
        <taxon>Photorhabdus</taxon>
    </lineage>
</organism>
<accession>Q7N6W6</accession>
<comment type="function">
    <text evidence="1">Part of the high-affinity ATP-driven potassium transport (or Kdp) system, which catalyzes the hydrolysis of ATP coupled with the electrogenic transport of potassium into the cytoplasm. This subunit is responsible for energy coupling to the transport system and for the release of the potassium ions to the cytoplasm.</text>
</comment>
<comment type="catalytic activity">
    <reaction evidence="1">
        <text>K(+)(out) + ATP + H2O = K(+)(in) + ADP + phosphate + H(+)</text>
        <dbReference type="Rhea" id="RHEA:16777"/>
        <dbReference type="ChEBI" id="CHEBI:15377"/>
        <dbReference type="ChEBI" id="CHEBI:15378"/>
        <dbReference type="ChEBI" id="CHEBI:29103"/>
        <dbReference type="ChEBI" id="CHEBI:30616"/>
        <dbReference type="ChEBI" id="CHEBI:43474"/>
        <dbReference type="ChEBI" id="CHEBI:456216"/>
        <dbReference type="EC" id="7.2.2.6"/>
    </reaction>
    <physiologicalReaction direction="left-to-right" evidence="1">
        <dbReference type="Rhea" id="RHEA:16778"/>
    </physiologicalReaction>
</comment>
<comment type="subunit">
    <text evidence="1">The system is composed of three essential subunits: KdpA, KdpB and KdpC.</text>
</comment>
<comment type="subcellular location">
    <subcellularLocation>
        <location evidence="1">Cell inner membrane</location>
        <topology evidence="1">Multi-pass membrane protein</topology>
    </subcellularLocation>
</comment>
<comment type="similarity">
    <text evidence="1">Belongs to the cation transport ATPase (P-type) (TC 3.A.3) family. Type IA subfamily.</text>
</comment>
<protein>
    <recommendedName>
        <fullName evidence="1">Potassium-transporting ATPase ATP-binding subunit</fullName>
        <ecNumber evidence="1">7.2.2.6</ecNumber>
    </recommendedName>
    <alternativeName>
        <fullName evidence="1">ATP phosphohydrolase [potassium-transporting] B chain</fullName>
    </alternativeName>
    <alternativeName>
        <fullName evidence="1">Potassium-binding and translocating subunit B</fullName>
    </alternativeName>
    <alternativeName>
        <fullName evidence="1">Potassium-translocating ATPase B chain</fullName>
    </alternativeName>
</protein>
<evidence type="ECO:0000255" key="1">
    <source>
        <dbReference type="HAMAP-Rule" id="MF_00285"/>
    </source>
</evidence>
<proteinExistence type="inferred from homology"/>
<name>KDPB_PHOLL</name>
<gene>
    <name evidence="1" type="primary">kdpB</name>
    <name type="ordered locus">plu1419</name>
</gene>
<keyword id="KW-0067">ATP-binding</keyword>
<keyword id="KW-0997">Cell inner membrane</keyword>
<keyword id="KW-1003">Cell membrane</keyword>
<keyword id="KW-0406">Ion transport</keyword>
<keyword id="KW-0460">Magnesium</keyword>
<keyword id="KW-0472">Membrane</keyword>
<keyword id="KW-0479">Metal-binding</keyword>
<keyword id="KW-0547">Nucleotide-binding</keyword>
<keyword id="KW-0597">Phosphoprotein</keyword>
<keyword id="KW-0630">Potassium</keyword>
<keyword id="KW-0633">Potassium transport</keyword>
<keyword id="KW-1185">Reference proteome</keyword>
<keyword id="KW-1278">Translocase</keyword>
<keyword id="KW-0812">Transmembrane</keyword>
<keyword id="KW-1133">Transmembrane helix</keyword>
<keyword id="KW-0813">Transport</keyword>
<sequence>MTNKQQTLFEPVLIRNALMDSVKKCHPAAQWRNPVMFVVYLGSGLTTILWIAMLAGQFKGNALFTGNIALWLWFTVLFANFAEALAEGRSKAQAASLKGVRKTSWATKLHSANRNGSREKAPSDSLRKGDIVIIEAGETIPCDGEVIEGGASVDESAITGESAPVIRESGGDFSSVTGGTHVLSDWLVVECSVNPGETFLDRMISMVEGAKRRKTPNEIALTILLTALTIIFLLVCVTLLPFSIFSVEINHSGQPITVTVLIALLVCLIPTTIGGLLSAIGVAGMSRMLSANVIATSGRAVEAAGDVDVLLLDKTGTITLGNRQASQFLPVPGITEQRLADAAQLSSLADETPEGRSIVILAKQRFNLRERDLRSLNATFVPFSAMTRMSGVNVENRMIRKGAVDAIRRHIEANHGKFPEAVEILVQTVARKGGTPLVVAENQQVLGVVALKDIVKGGIKERFSEMRRMGIKTVMITGDNRLTAAAIAAEAGVDDFLAEATPEAKLALIRQYQSEGRLVAMTGDGTNDAPALAQADVAVAMNSGTQAAKEAGNMVDLDSNPTKLIEVVHIGKQMLMTRGSLTTFSIANDIAKYFAIIPAAFAVTYPQLNILNIMHLHSPTSAVLSTVIFNALIIVFLIPLALKGVSYRPMNASALLRRNLWIYGLGGLIAPFIGIKLIDLLLTLLILK</sequence>
<dbReference type="EC" id="7.2.2.6" evidence="1"/>
<dbReference type="EMBL" id="BX571863">
    <property type="protein sequence ID" value="CAE13712.1"/>
    <property type="molecule type" value="Genomic_DNA"/>
</dbReference>
<dbReference type="RefSeq" id="WP_011145725.1">
    <property type="nucleotide sequence ID" value="NC_005126.1"/>
</dbReference>
<dbReference type="SMR" id="Q7N6W6"/>
<dbReference type="STRING" id="243265.plu1419"/>
<dbReference type="GeneID" id="48847706"/>
<dbReference type="KEGG" id="plu:plu1419"/>
<dbReference type="eggNOG" id="COG2216">
    <property type="taxonomic scope" value="Bacteria"/>
</dbReference>
<dbReference type="HOGENOM" id="CLU_025728_2_0_6"/>
<dbReference type="OrthoDB" id="9814270at2"/>
<dbReference type="Proteomes" id="UP000002514">
    <property type="component" value="Chromosome"/>
</dbReference>
<dbReference type="GO" id="GO:0005886">
    <property type="term" value="C:plasma membrane"/>
    <property type="evidence" value="ECO:0007669"/>
    <property type="project" value="UniProtKB-SubCell"/>
</dbReference>
<dbReference type="GO" id="GO:0005524">
    <property type="term" value="F:ATP binding"/>
    <property type="evidence" value="ECO:0007669"/>
    <property type="project" value="UniProtKB-UniRule"/>
</dbReference>
<dbReference type="GO" id="GO:0016887">
    <property type="term" value="F:ATP hydrolysis activity"/>
    <property type="evidence" value="ECO:0007669"/>
    <property type="project" value="InterPro"/>
</dbReference>
<dbReference type="GO" id="GO:0000287">
    <property type="term" value="F:magnesium ion binding"/>
    <property type="evidence" value="ECO:0007669"/>
    <property type="project" value="UniProtKB-UniRule"/>
</dbReference>
<dbReference type="GO" id="GO:0008556">
    <property type="term" value="F:P-type potassium transmembrane transporter activity"/>
    <property type="evidence" value="ECO:0007669"/>
    <property type="project" value="UniProtKB-UniRule"/>
</dbReference>
<dbReference type="CDD" id="cd02078">
    <property type="entry name" value="P-type_ATPase_K"/>
    <property type="match status" value="1"/>
</dbReference>
<dbReference type="FunFam" id="2.70.150.10:FF:000010">
    <property type="entry name" value="Potassium-transporting ATPase ATP-binding subunit"/>
    <property type="match status" value="1"/>
</dbReference>
<dbReference type="FunFam" id="3.40.1110.10:FF:000007">
    <property type="entry name" value="Potassium-transporting ATPase ATP-binding subunit"/>
    <property type="match status" value="1"/>
</dbReference>
<dbReference type="Gene3D" id="3.40.1110.10">
    <property type="entry name" value="Calcium-transporting ATPase, cytoplasmic domain N"/>
    <property type="match status" value="1"/>
</dbReference>
<dbReference type="Gene3D" id="2.70.150.10">
    <property type="entry name" value="Calcium-transporting ATPase, cytoplasmic transduction domain A"/>
    <property type="match status" value="1"/>
</dbReference>
<dbReference type="Gene3D" id="3.40.50.1000">
    <property type="entry name" value="HAD superfamily/HAD-like"/>
    <property type="match status" value="1"/>
</dbReference>
<dbReference type="HAMAP" id="MF_00285">
    <property type="entry name" value="KdpB"/>
    <property type="match status" value="1"/>
</dbReference>
<dbReference type="InterPro" id="IPR023299">
    <property type="entry name" value="ATPase_P-typ_cyto_dom_N"/>
</dbReference>
<dbReference type="InterPro" id="IPR018303">
    <property type="entry name" value="ATPase_P-typ_P_site"/>
</dbReference>
<dbReference type="InterPro" id="IPR023298">
    <property type="entry name" value="ATPase_P-typ_TM_dom_sf"/>
</dbReference>
<dbReference type="InterPro" id="IPR008250">
    <property type="entry name" value="ATPase_P-typ_transduc_dom_A_sf"/>
</dbReference>
<dbReference type="InterPro" id="IPR036412">
    <property type="entry name" value="HAD-like_sf"/>
</dbReference>
<dbReference type="InterPro" id="IPR023214">
    <property type="entry name" value="HAD_sf"/>
</dbReference>
<dbReference type="InterPro" id="IPR006391">
    <property type="entry name" value="P-type_ATPase_bsu_IA"/>
</dbReference>
<dbReference type="InterPro" id="IPR001757">
    <property type="entry name" value="P_typ_ATPase"/>
</dbReference>
<dbReference type="InterPro" id="IPR044492">
    <property type="entry name" value="P_typ_ATPase_HD_dom"/>
</dbReference>
<dbReference type="NCBIfam" id="TIGR01494">
    <property type="entry name" value="ATPase_P-type"/>
    <property type="match status" value="2"/>
</dbReference>
<dbReference type="NCBIfam" id="TIGR01497">
    <property type="entry name" value="kdpB"/>
    <property type="match status" value="1"/>
</dbReference>
<dbReference type="PANTHER" id="PTHR43743">
    <property type="entry name" value="POTASSIUM-TRANSPORTING ATPASE ATP-BINDING SUBUNIT"/>
    <property type="match status" value="1"/>
</dbReference>
<dbReference type="PANTHER" id="PTHR43743:SF1">
    <property type="entry name" value="POTASSIUM-TRANSPORTING ATPASE ATP-BINDING SUBUNIT"/>
    <property type="match status" value="1"/>
</dbReference>
<dbReference type="Pfam" id="PF00122">
    <property type="entry name" value="E1-E2_ATPase"/>
    <property type="match status" value="1"/>
</dbReference>
<dbReference type="Pfam" id="PF00702">
    <property type="entry name" value="Hydrolase"/>
    <property type="match status" value="1"/>
</dbReference>
<dbReference type="PRINTS" id="PR00119">
    <property type="entry name" value="CATATPASE"/>
</dbReference>
<dbReference type="SFLD" id="SFLDG00002">
    <property type="entry name" value="C1.7:_P-type_atpase_like"/>
    <property type="match status" value="1"/>
</dbReference>
<dbReference type="SFLD" id="SFLDF00027">
    <property type="entry name" value="p-type_atpase"/>
    <property type="match status" value="1"/>
</dbReference>
<dbReference type="SUPFAM" id="SSF81653">
    <property type="entry name" value="Calcium ATPase, transduction domain A"/>
    <property type="match status" value="1"/>
</dbReference>
<dbReference type="SUPFAM" id="SSF81665">
    <property type="entry name" value="Calcium ATPase, transmembrane domain M"/>
    <property type="match status" value="1"/>
</dbReference>
<dbReference type="SUPFAM" id="SSF56784">
    <property type="entry name" value="HAD-like"/>
    <property type="match status" value="1"/>
</dbReference>
<dbReference type="PROSITE" id="PS00154">
    <property type="entry name" value="ATPASE_E1_E2"/>
    <property type="match status" value="1"/>
</dbReference>
<feature type="chain" id="PRO_1000022443" description="Potassium-transporting ATPase ATP-binding subunit">
    <location>
        <begin position="1"/>
        <end position="688"/>
    </location>
</feature>
<feature type="transmembrane region" description="Helical" evidence="1">
    <location>
        <begin position="35"/>
        <end position="55"/>
    </location>
</feature>
<feature type="transmembrane region" description="Helical" evidence="1">
    <location>
        <begin position="62"/>
        <end position="82"/>
    </location>
</feature>
<feature type="transmembrane region" description="Helical" evidence="1">
    <location>
        <begin position="219"/>
        <end position="239"/>
    </location>
</feature>
<feature type="transmembrane region" description="Helical" evidence="1">
    <location>
        <begin position="260"/>
        <end position="280"/>
    </location>
</feature>
<feature type="transmembrane region" description="Helical" evidence="1">
    <location>
        <begin position="594"/>
        <end position="614"/>
    </location>
</feature>
<feature type="transmembrane region" description="Helical" evidence="1">
    <location>
        <begin position="622"/>
        <end position="642"/>
    </location>
</feature>
<feature type="transmembrane region" description="Helical" evidence="1">
    <location>
        <begin position="667"/>
        <end position="687"/>
    </location>
</feature>
<feature type="active site" description="4-aspartylphosphate intermediate" evidence="1">
    <location>
        <position position="313"/>
    </location>
</feature>
<feature type="binding site" evidence="1">
    <location>
        <position position="350"/>
    </location>
    <ligand>
        <name>ATP</name>
        <dbReference type="ChEBI" id="CHEBI:30616"/>
    </ligand>
</feature>
<feature type="binding site" evidence="1">
    <location>
        <position position="354"/>
    </location>
    <ligand>
        <name>ATP</name>
        <dbReference type="ChEBI" id="CHEBI:30616"/>
    </ligand>
</feature>
<feature type="binding site" evidence="1">
    <location>
        <begin position="383"/>
        <end position="390"/>
    </location>
    <ligand>
        <name>ATP</name>
        <dbReference type="ChEBI" id="CHEBI:30616"/>
    </ligand>
</feature>
<feature type="binding site" evidence="1">
    <location>
        <position position="401"/>
    </location>
    <ligand>
        <name>ATP</name>
        <dbReference type="ChEBI" id="CHEBI:30616"/>
    </ligand>
</feature>
<feature type="binding site" evidence="1">
    <location>
        <position position="524"/>
    </location>
    <ligand>
        <name>Mg(2+)</name>
        <dbReference type="ChEBI" id="CHEBI:18420"/>
    </ligand>
</feature>
<feature type="binding site" evidence="1">
    <location>
        <position position="528"/>
    </location>
    <ligand>
        <name>Mg(2+)</name>
        <dbReference type="ChEBI" id="CHEBI:18420"/>
    </ligand>
</feature>
<reference key="1">
    <citation type="journal article" date="2003" name="Nat. Biotechnol.">
        <title>The genome sequence of the entomopathogenic bacterium Photorhabdus luminescens.</title>
        <authorList>
            <person name="Duchaud E."/>
            <person name="Rusniok C."/>
            <person name="Frangeul L."/>
            <person name="Buchrieser C."/>
            <person name="Givaudan A."/>
            <person name="Taourit S."/>
            <person name="Bocs S."/>
            <person name="Boursaux-Eude C."/>
            <person name="Chandler M."/>
            <person name="Charles J.-F."/>
            <person name="Dassa E."/>
            <person name="Derose R."/>
            <person name="Derzelle S."/>
            <person name="Freyssinet G."/>
            <person name="Gaudriault S."/>
            <person name="Medigue C."/>
            <person name="Lanois A."/>
            <person name="Powell K."/>
            <person name="Siguier P."/>
            <person name="Vincent R."/>
            <person name="Wingate V."/>
            <person name="Zouine M."/>
            <person name="Glaser P."/>
            <person name="Boemare N."/>
            <person name="Danchin A."/>
            <person name="Kunst F."/>
        </authorList>
    </citation>
    <scope>NUCLEOTIDE SEQUENCE [LARGE SCALE GENOMIC DNA]</scope>
    <source>
        <strain>DSM 15139 / CIP 105565 / TT01</strain>
    </source>
</reference>